<proteinExistence type="inferred from homology"/>
<comment type="function">
    <text evidence="1">Key component of the proton channel; it plays a direct role in the translocation of protons across the membrane.</text>
</comment>
<comment type="subunit">
    <text evidence="1">F-type ATPases have 2 components, CF(1) - the catalytic core - and CF(0) - the membrane proton channel. CF(1) has five subunits: alpha(3), beta(3), gamma(1), delta(1), epsilon(1). CF(0) has four main subunits: a, b, b' and c.</text>
</comment>
<comment type="subcellular location">
    <subcellularLocation>
        <location evidence="1">Cellular thylakoid membrane</location>
        <topology evidence="1">Multi-pass membrane protein</topology>
    </subcellularLocation>
</comment>
<comment type="similarity">
    <text evidence="1">Belongs to the ATPase A chain family.</text>
</comment>
<protein>
    <recommendedName>
        <fullName evidence="1">ATP synthase subunit a</fullName>
    </recommendedName>
    <alternativeName>
        <fullName evidence="1">ATP synthase F0 sector subunit a</fullName>
    </alternativeName>
    <alternativeName>
        <fullName evidence="1">F-ATPase subunit 6</fullName>
    </alternativeName>
</protein>
<gene>
    <name evidence="1" type="primary">atpB</name>
    <name evidence="1" type="synonym">atpI</name>
    <name type="ordered locus">sll1322</name>
</gene>
<reference key="1">
    <citation type="journal article" date="1991" name="Plant Mol. Biol.">
        <title>The atp1 and atp2 operons of the cyanobacterium Synechocystis sp. PCC 6803.</title>
        <authorList>
            <person name="Lill H."/>
            <person name="Nelson N."/>
        </authorList>
    </citation>
    <scope>NUCLEOTIDE SEQUENCE [GENOMIC DNA]</scope>
</reference>
<reference key="2">
    <citation type="journal article" date="1996" name="DNA Res.">
        <title>Sequence analysis of the genome of the unicellular cyanobacterium Synechocystis sp. strain PCC6803. II. Sequence determination of the entire genome and assignment of potential protein-coding regions.</title>
        <authorList>
            <person name="Kaneko T."/>
            <person name="Sato S."/>
            <person name="Kotani H."/>
            <person name="Tanaka A."/>
            <person name="Asamizu E."/>
            <person name="Nakamura Y."/>
            <person name="Miyajima N."/>
            <person name="Hirosawa M."/>
            <person name="Sugiura M."/>
            <person name="Sasamoto S."/>
            <person name="Kimura T."/>
            <person name="Hosouchi T."/>
            <person name="Matsuno A."/>
            <person name="Muraki A."/>
            <person name="Nakazaki N."/>
            <person name="Naruo K."/>
            <person name="Okumura S."/>
            <person name="Shimpo S."/>
            <person name="Takeuchi C."/>
            <person name="Wada T."/>
            <person name="Watanabe A."/>
            <person name="Yamada M."/>
            <person name="Yasuda M."/>
            <person name="Tabata S."/>
        </authorList>
    </citation>
    <scope>NUCLEOTIDE SEQUENCE [LARGE SCALE GENOMIC DNA]</scope>
    <source>
        <strain>ATCC 27184 / PCC 6803 / Kazusa</strain>
    </source>
</reference>
<feature type="chain" id="PRO_0000082076" description="ATP synthase subunit a">
    <location>
        <begin position="1"/>
        <end position="276"/>
    </location>
</feature>
<feature type="transmembrane region" description="Helical" evidence="1">
    <location>
        <begin position="27"/>
        <end position="47"/>
    </location>
</feature>
<feature type="transmembrane region" description="Helical" evidence="1">
    <location>
        <begin position="61"/>
        <end position="81"/>
    </location>
</feature>
<feature type="transmembrane region" description="Helical" evidence="1">
    <location>
        <begin position="120"/>
        <end position="140"/>
    </location>
</feature>
<feature type="transmembrane region" description="Helical" evidence="1">
    <location>
        <begin position="159"/>
        <end position="179"/>
    </location>
</feature>
<feature type="transmembrane region" description="Helical" evidence="1">
    <location>
        <begin position="225"/>
        <end position="245"/>
    </location>
</feature>
<feature type="transmembrane region" description="Helical" evidence="1">
    <location>
        <begin position="246"/>
        <end position="266"/>
    </location>
</feature>
<organism>
    <name type="scientific">Synechocystis sp. (strain ATCC 27184 / PCC 6803 / Kazusa)</name>
    <dbReference type="NCBI Taxonomy" id="1111708"/>
    <lineage>
        <taxon>Bacteria</taxon>
        <taxon>Bacillati</taxon>
        <taxon>Cyanobacteriota</taxon>
        <taxon>Cyanophyceae</taxon>
        <taxon>Synechococcales</taxon>
        <taxon>Merismopediaceae</taxon>
        <taxon>Synechocystis</taxon>
    </lineage>
</organism>
<accession>P27178</accession>
<dbReference type="EMBL" id="X58128">
    <property type="protein sequence ID" value="CAA41130.1"/>
    <property type="molecule type" value="Genomic_DNA"/>
</dbReference>
<dbReference type="EMBL" id="BA000022">
    <property type="protein sequence ID" value="BAA16740.1"/>
    <property type="molecule type" value="Genomic_DNA"/>
</dbReference>
<dbReference type="PIR" id="S17746">
    <property type="entry name" value="PWYBAA"/>
</dbReference>
<dbReference type="SMR" id="P27178"/>
<dbReference type="FunCoup" id="P27178">
    <property type="interactions" value="328"/>
</dbReference>
<dbReference type="IntAct" id="P27178">
    <property type="interactions" value="2"/>
</dbReference>
<dbReference type="STRING" id="1148.gene:10497595"/>
<dbReference type="PaxDb" id="1148-1651813"/>
<dbReference type="EnsemblBacteria" id="BAA16740">
    <property type="protein sequence ID" value="BAA16740"/>
    <property type="gene ID" value="BAA16740"/>
</dbReference>
<dbReference type="KEGG" id="syn:sll1322"/>
<dbReference type="eggNOG" id="COG0356">
    <property type="taxonomic scope" value="Bacteria"/>
</dbReference>
<dbReference type="InParanoid" id="P27178"/>
<dbReference type="PhylomeDB" id="P27178"/>
<dbReference type="Proteomes" id="UP000001425">
    <property type="component" value="Chromosome"/>
</dbReference>
<dbReference type="GO" id="GO:0031676">
    <property type="term" value="C:plasma membrane-derived thylakoid membrane"/>
    <property type="evidence" value="ECO:0007669"/>
    <property type="project" value="UniProtKB-SubCell"/>
</dbReference>
<dbReference type="GO" id="GO:0045259">
    <property type="term" value="C:proton-transporting ATP synthase complex"/>
    <property type="evidence" value="ECO:0000318"/>
    <property type="project" value="GO_Central"/>
</dbReference>
<dbReference type="GO" id="GO:0046933">
    <property type="term" value="F:proton-transporting ATP synthase activity, rotational mechanism"/>
    <property type="evidence" value="ECO:0007669"/>
    <property type="project" value="UniProtKB-UniRule"/>
</dbReference>
<dbReference type="GO" id="GO:0015986">
    <property type="term" value="P:proton motive force-driven ATP synthesis"/>
    <property type="evidence" value="ECO:0000318"/>
    <property type="project" value="GO_Central"/>
</dbReference>
<dbReference type="CDD" id="cd00310">
    <property type="entry name" value="ATP-synt_Fo_a_6"/>
    <property type="match status" value="1"/>
</dbReference>
<dbReference type="FunFam" id="1.20.120.220:FF:000001">
    <property type="entry name" value="ATP synthase subunit a, chloroplastic"/>
    <property type="match status" value="1"/>
</dbReference>
<dbReference type="Gene3D" id="1.20.120.220">
    <property type="entry name" value="ATP synthase, F0 complex, subunit A"/>
    <property type="match status" value="1"/>
</dbReference>
<dbReference type="HAMAP" id="MF_01393">
    <property type="entry name" value="ATP_synth_a_bact"/>
    <property type="match status" value="1"/>
</dbReference>
<dbReference type="InterPro" id="IPR045082">
    <property type="entry name" value="ATP_syn_F0_a_bact/chloroplast"/>
</dbReference>
<dbReference type="InterPro" id="IPR000568">
    <property type="entry name" value="ATP_synth_F0_asu"/>
</dbReference>
<dbReference type="InterPro" id="IPR023011">
    <property type="entry name" value="ATP_synth_F0_asu_AS"/>
</dbReference>
<dbReference type="InterPro" id="IPR035908">
    <property type="entry name" value="F0_ATP_A_sf"/>
</dbReference>
<dbReference type="NCBIfam" id="TIGR01131">
    <property type="entry name" value="ATP_synt_6_or_A"/>
    <property type="match status" value="1"/>
</dbReference>
<dbReference type="PANTHER" id="PTHR42823">
    <property type="entry name" value="ATP SYNTHASE SUBUNIT A, CHLOROPLASTIC"/>
    <property type="match status" value="1"/>
</dbReference>
<dbReference type="PANTHER" id="PTHR42823:SF3">
    <property type="entry name" value="ATP SYNTHASE SUBUNIT A, CHLOROPLASTIC"/>
    <property type="match status" value="1"/>
</dbReference>
<dbReference type="Pfam" id="PF00119">
    <property type="entry name" value="ATP-synt_A"/>
    <property type="match status" value="1"/>
</dbReference>
<dbReference type="PRINTS" id="PR00123">
    <property type="entry name" value="ATPASEA"/>
</dbReference>
<dbReference type="SUPFAM" id="SSF81336">
    <property type="entry name" value="F1F0 ATP synthase subunit A"/>
    <property type="match status" value="1"/>
</dbReference>
<dbReference type="PROSITE" id="PS00449">
    <property type="entry name" value="ATPASE_A"/>
    <property type="match status" value="1"/>
</dbReference>
<name>ATP6_SYNY3</name>
<sequence length="276" mass="30698">MQGSLSWLLRFVEGQQLSSLPRQSHRITMLAGLSVLNLFPLAALEVGQQWYWEIGNLKLHGQTFATSWFVILLLVIASLAATRNVQRVPSGIQNLMEYVLEFLRDLARNQLGEKEYRPWLPFIGTLFLFIFVSNWSGALLPWKLIHIPDGAELAAPTNDINTTVALALLTSLAYFYAGLRKKGLGYFANYVQPIPVLLPIKILEDFTKPLSLSFRLFGNILADELVVAVLVLLVPLLVPLPLMALGLFTSAIQALVFATLAGAYIHEAIESEGEEH</sequence>
<evidence type="ECO:0000255" key="1">
    <source>
        <dbReference type="HAMAP-Rule" id="MF_01393"/>
    </source>
</evidence>
<keyword id="KW-0066">ATP synthesis</keyword>
<keyword id="KW-0138">CF(0)</keyword>
<keyword id="KW-0375">Hydrogen ion transport</keyword>
<keyword id="KW-0406">Ion transport</keyword>
<keyword id="KW-0472">Membrane</keyword>
<keyword id="KW-1185">Reference proteome</keyword>
<keyword id="KW-0793">Thylakoid</keyword>
<keyword id="KW-0812">Transmembrane</keyword>
<keyword id="KW-1133">Transmembrane helix</keyword>
<keyword id="KW-0813">Transport</keyword>